<accession>Q12310</accession>
<accession>D6VRE0</accession>
<feature type="chain" id="PRO_0000262752" description="Serine/threonine-protein kinase PRR2">
    <location>
        <begin position="1"/>
        <end position="699"/>
    </location>
</feature>
<feature type="domain" description="Protein kinase" evidence="1">
    <location>
        <begin position="361"/>
        <end position="653"/>
    </location>
</feature>
<feature type="region of interest" description="Disordered" evidence="3">
    <location>
        <begin position="168"/>
        <end position="193"/>
    </location>
</feature>
<feature type="compositionally biased region" description="Polar residues" evidence="3">
    <location>
        <begin position="184"/>
        <end position="193"/>
    </location>
</feature>
<feature type="active site" description="Proton acceptor" evidence="1 2">
    <location>
        <position position="484"/>
    </location>
</feature>
<feature type="binding site" evidence="1">
    <location>
        <begin position="367"/>
        <end position="375"/>
    </location>
    <ligand>
        <name>ATP</name>
        <dbReference type="ChEBI" id="CHEBI:30616"/>
    </ligand>
</feature>
<feature type="binding site" evidence="1">
    <location>
        <position position="390"/>
    </location>
    <ligand>
        <name>ATP</name>
        <dbReference type="ChEBI" id="CHEBI:30616"/>
    </ligand>
</feature>
<feature type="mutagenesis site" description="Abolishes kinase activity." evidence="6">
    <original>K</original>
    <variation>R</variation>
    <location>
        <position position="390"/>
    </location>
</feature>
<proteinExistence type="evidence at protein level"/>
<name>PRR2_YEAST</name>
<reference key="1">
    <citation type="journal article" date="1997" name="Yeast">
        <title>The nucleotide sequence of a 39 kb segment of yeast chromosome IV: 12 new open reading frames, nine known genes and one gene for Gly-tRNA.</title>
        <authorList>
            <person name="Bahr A."/>
            <person name="Moeller-Rieker S."/>
            <person name="Hankeln T."/>
            <person name="Kraemer C."/>
            <person name="Protin U."/>
            <person name="Schmidt E.R."/>
        </authorList>
    </citation>
    <scope>NUCLEOTIDE SEQUENCE [GENOMIC DNA]</scope>
    <source>
        <strain>ATCC 96604 / S288c / FY1679</strain>
    </source>
</reference>
<reference key="2">
    <citation type="journal article" date="1997" name="Nature">
        <title>The nucleotide sequence of Saccharomyces cerevisiae chromosome IV.</title>
        <authorList>
            <person name="Jacq C."/>
            <person name="Alt-Moerbe J."/>
            <person name="Andre B."/>
            <person name="Arnold W."/>
            <person name="Bahr A."/>
            <person name="Ballesta J.P.G."/>
            <person name="Bargues M."/>
            <person name="Baron L."/>
            <person name="Becker A."/>
            <person name="Biteau N."/>
            <person name="Bloecker H."/>
            <person name="Blugeon C."/>
            <person name="Boskovic J."/>
            <person name="Brandt P."/>
            <person name="Brueckner M."/>
            <person name="Buitrago M.J."/>
            <person name="Coster F."/>
            <person name="Delaveau T."/>
            <person name="del Rey F."/>
            <person name="Dujon B."/>
            <person name="Eide L.G."/>
            <person name="Garcia-Cantalejo J.M."/>
            <person name="Goffeau A."/>
            <person name="Gomez-Peris A."/>
            <person name="Granotier C."/>
            <person name="Hanemann V."/>
            <person name="Hankeln T."/>
            <person name="Hoheisel J.D."/>
            <person name="Jaeger W."/>
            <person name="Jimenez A."/>
            <person name="Jonniaux J.-L."/>
            <person name="Kraemer C."/>
            <person name="Kuester H."/>
            <person name="Laamanen P."/>
            <person name="Legros Y."/>
            <person name="Louis E.J."/>
            <person name="Moeller-Rieker S."/>
            <person name="Monnet A."/>
            <person name="Moro M."/>
            <person name="Mueller-Auer S."/>
            <person name="Nussbaumer B."/>
            <person name="Paricio N."/>
            <person name="Paulin L."/>
            <person name="Perea J."/>
            <person name="Perez-Alonso M."/>
            <person name="Perez-Ortin J.E."/>
            <person name="Pohl T.M."/>
            <person name="Prydz H."/>
            <person name="Purnelle B."/>
            <person name="Rasmussen S.W."/>
            <person name="Remacha M.A."/>
            <person name="Revuelta J.L."/>
            <person name="Rieger M."/>
            <person name="Salom D."/>
            <person name="Saluz H.P."/>
            <person name="Saiz J.E."/>
            <person name="Saren A.-M."/>
            <person name="Schaefer M."/>
            <person name="Scharfe M."/>
            <person name="Schmidt E.R."/>
            <person name="Schneider C."/>
            <person name="Scholler P."/>
            <person name="Schwarz S."/>
            <person name="Soler-Mira A."/>
            <person name="Urrestarazu L.A."/>
            <person name="Verhasselt P."/>
            <person name="Vissers S."/>
            <person name="Voet M."/>
            <person name="Volckaert G."/>
            <person name="Wagner G."/>
            <person name="Wambutt R."/>
            <person name="Wedler E."/>
            <person name="Wedler H."/>
            <person name="Woelfl S."/>
            <person name="Harris D.E."/>
            <person name="Bowman S."/>
            <person name="Brown D."/>
            <person name="Churcher C.M."/>
            <person name="Connor R."/>
            <person name="Dedman K."/>
            <person name="Gentles S."/>
            <person name="Hamlin N."/>
            <person name="Hunt S."/>
            <person name="Jones L."/>
            <person name="McDonald S."/>
            <person name="Murphy L.D."/>
            <person name="Niblett D."/>
            <person name="Odell C."/>
            <person name="Oliver K."/>
            <person name="Rajandream M.A."/>
            <person name="Richards C."/>
            <person name="Shore L."/>
            <person name="Walsh S.V."/>
            <person name="Barrell B.G."/>
            <person name="Dietrich F.S."/>
            <person name="Mulligan J.T."/>
            <person name="Allen E."/>
            <person name="Araujo R."/>
            <person name="Aviles E."/>
            <person name="Berno A."/>
            <person name="Carpenter J."/>
            <person name="Chen E."/>
            <person name="Cherry J.M."/>
            <person name="Chung E."/>
            <person name="Duncan M."/>
            <person name="Hunicke-Smith S."/>
            <person name="Hyman R.W."/>
            <person name="Komp C."/>
            <person name="Lashkari D."/>
            <person name="Lew H."/>
            <person name="Lin D."/>
            <person name="Mosedale D."/>
            <person name="Nakahara K."/>
            <person name="Namath A."/>
            <person name="Oefner P."/>
            <person name="Oh C."/>
            <person name="Petel F.X."/>
            <person name="Roberts D."/>
            <person name="Schramm S."/>
            <person name="Schroeder M."/>
            <person name="Shogren T."/>
            <person name="Shroff N."/>
            <person name="Winant A."/>
            <person name="Yelton M.A."/>
            <person name="Botstein D."/>
            <person name="Davis R.W."/>
            <person name="Johnston M."/>
            <person name="Andrews S."/>
            <person name="Brinkman R."/>
            <person name="Cooper J."/>
            <person name="Ding H."/>
            <person name="Du Z."/>
            <person name="Favello A."/>
            <person name="Fulton L."/>
            <person name="Gattung S."/>
            <person name="Greco T."/>
            <person name="Hallsworth K."/>
            <person name="Hawkins J."/>
            <person name="Hillier L.W."/>
            <person name="Jier M."/>
            <person name="Johnson D."/>
            <person name="Johnston L."/>
            <person name="Kirsten J."/>
            <person name="Kucaba T."/>
            <person name="Langston Y."/>
            <person name="Latreille P."/>
            <person name="Le T."/>
            <person name="Mardis E."/>
            <person name="Menezes S."/>
            <person name="Miller N."/>
            <person name="Nhan M."/>
            <person name="Pauley A."/>
            <person name="Peluso D."/>
            <person name="Rifkin L."/>
            <person name="Riles L."/>
            <person name="Taich A."/>
            <person name="Trevaskis E."/>
            <person name="Vignati D."/>
            <person name="Wilcox L."/>
            <person name="Wohldman P."/>
            <person name="Vaudin M."/>
            <person name="Wilson R."/>
            <person name="Waterston R."/>
            <person name="Albermann K."/>
            <person name="Hani J."/>
            <person name="Heumann K."/>
            <person name="Kleine K."/>
            <person name="Mewes H.-W."/>
            <person name="Zollner A."/>
            <person name="Zaccaria P."/>
        </authorList>
    </citation>
    <scope>NUCLEOTIDE SEQUENCE [LARGE SCALE GENOMIC DNA]</scope>
    <source>
        <strain>ATCC 204508 / S288c</strain>
    </source>
</reference>
<reference key="3">
    <citation type="journal article" date="2014" name="G3 (Bethesda)">
        <title>The reference genome sequence of Saccharomyces cerevisiae: Then and now.</title>
        <authorList>
            <person name="Engel S.R."/>
            <person name="Dietrich F.S."/>
            <person name="Fisk D.G."/>
            <person name="Binkley G."/>
            <person name="Balakrishnan R."/>
            <person name="Costanzo M.C."/>
            <person name="Dwight S.S."/>
            <person name="Hitz B.C."/>
            <person name="Karra K."/>
            <person name="Nash R.S."/>
            <person name="Weng S."/>
            <person name="Wong E.D."/>
            <person name="Lloyd P."/>
            <person name="Skrzypek M.S."/>
            <person name="Miyasato S.R."/>
            <person name="Simison M."/>
            <person name="Cherry J.M."/>
        </authorList>
    </citation>
    <scope>GENOME REANNOTATION</scope>
    <source>
        <strain>ATCC 204508 / S288c</strain>
    </source>
</reference>
<reference key="4">
    <citation type="journal article" date="2000" name="J. Biol. Chem.">
        <title>Tripartite regulation of Gln3p by TOR, Ure2p, and phosphatases.</title>
        <authorList>
            <person name="Bertram P.G."/>
            <person name="Choi J.H."/>
            <person name="Carvalho J."/>
            <person name="Ai W."/>
            <person name="Zeng C."/>
            <person name="Chan T.-F."/>
            <person name="Zheng X.F.S."/>
        </authorList>
    </citation>
    <scope>INDUCTION</scope>
</reference>
<reference key="5">
    <citation type="journal article" date="2000" name="Nat. Genet.">
        <title>Analysis of yeast protein kinases using protein chips.</title>
        <authorList>
            <person name="Zhu H."/>
            <person name="Klemic J.F."/>
            <person name="Chang S."/>
            <person name="Bertone P."/>
            <person name="Casamayor A."/>
            <person name="Klemic K.G."/>
            <person name="Smith D."/>
            <person name="Gerstein M."/>
            <person name="Reed M.A."/>
            <person name="Snyder M."/>
        </authorList>
    </citation>
    <scope>CATALYTIC ACTIVITY</scope>
</reference>
<reference key="6">
    <citation type="journal article" date="2001" name="J. Biol. Chem.">
        <title>Identification of novel pheromone-response regulators through systematic overexpression of 120 protein kinases in yeast.</title>
        <authorList>
            <person name="Burchett S.A."/>
            <person name="Scott A."/>
            <person name="Errede B."/>
            <person name="Dohlman H.G."/>
        </authorList>
    </citation>
    <scope>FUNCTION</scope>
    <scope>MUTAGENESIS OF LYS-390</scope>
</reference>
<reference key="7">
    <citation type="journal article" date="2005" name="Nature">
        <title>Global analysis of protein phosphorylation in yeast.</title>
        <authorList>
            <person name="Ptacek J."/>
            <person name="Devgan G."/>
            <person name="Michaud G."/>
            <person name="Zhu H."/>
            <person name="Zhu X."/>
            <person name="Fasolo J."/>
            <person name="Guo H."/>
            <person name="Jona G."/>
            <person name="Breitkreutz A."/>
            <person name="Sopko R."/>
            <person name="McCartney R.R."/>
            <person name="Schmidt M.C."/>
            <person name="Rachidi N."/>
            <person name="Lee S.-J."/>
            <person name="Mah A.S."/>
            <person name="Meng L."/>
            <person name="Stark M.J.R."/>
            <person name="Stern D.F."/>
            <person name="De Virgilio C."/>
            <person name="Tyers M."/>
            <person name="Andrews B."/>
            <person name="Gerstein M."/>
            <person name="Schweitzer B."/>
            <person name="Predki P.F."/>
            <person name="Snyder M."/>
        </authorList>
    </citation>
    <scope>CATALYTIC ACTIVITY</scope>
</reference>
<gene>
    <name type="primary">PRR2</name>
    <name type="ordered locus">YDL214C</name>
    <name type="ORF">D1014</name>
</gene>
<comment type="function">
    <text evidence="6">Protein kinase that functions as a regulator in the pheromone-induced mating pathway downstream of mitogen-activated protein kinase (MAPK) FUS3. Diminishes transcriptional induction of genes in response to pheromone signaling.</text>
</comment>
<comment type="catalytic activity">
    <reaction evidence="5 7">
        <text>L-seryl-[protein] + ATP = O-phospho-L-seryl-[protein] + ADP + H(+)</text>
        <dbReference type="Rhea" id="RHEA:17989"/>
        <dbReference type="Rhea" id="RHEA-COMP:9863"/>
        <dbReference type="Rhea" id="RHEA-COMP:11604"/>
        <dbReference type="ChEBI" id="CHEBI:15378"/>
        <dbReference type="ChEBI" id="CHEBI:29999"/>
        <dbReference type="ChEBI" id="CHEBI:30616"/>
        <dbReference type="ChEBI" id="CHEBI:83421"/>
        <dbReference type="ChEBI" id="CHEBI:456216"/>
        <dbReference type="EC" id="2.7.11.1"/>
    </reaction>
</comment>
<comment type="catalytic activity">
    <reaction evidence="5 7">
        <text>L-threonyl-[protein] + ATP = O-phospho-L-threonyl-[protein] + ADP + H(+)</text>
        <dbReference type="Rhea" id="RHEA:46608"/>
        <dbReference type="Rhea" id="RHEA-COMP:11060"/>
        <dbReference type="Rhea" id="RHEA-COMP:11605"/>
        <dbReference type="ChEBI" id="CHEBI:15378"/>
        <dbReference type="ChEBI" id="CHEBI:30013"/>
        <dbReference type="ChEBI" id="CHEBI:30616"/>
        <dbReference type="ChEBI" id="CHEBI:61977"/>
        <dbReference type="ChEBI" id="CHEBI:456216"/>
        <dbReference type="EC" id="2.7.11.1"/>
    </reaction>
</comment>
<comment type="induction">
    <text evidence="4">By the macrolide rapamycin in a TOR-dependent manner.</text>
</comment>
<comment type="similarity">
    <text evidence="1">Belongs to the protein kinase superfamily. Ser/Thr protein kinase family.</text>
</comment>
<keyword id="KW-0067">ATP-binding</keyword>
<keyword id="KW-0418">Kinase</keyword>
<keyword id="KW-0547">Nucleotide-binding</keyword>
<keyword id="KW-0589">Pheromone response</keyword>
<keyword id="KW-1185">Reference proteome</keyword>
<keyword id="KW-0723">Serine/threonine-protein kinase</keyword>
<keyword id="KW-0808">Transferase</keyword>
<sequence length="699" mass="78939">MSLSRILRYNQRNNKTTASLTAEHAYSDNWAYSVSLGDPTSVGVNMAAKTGEALNKSYDSVFSSLPVADSVPRTDFTASSRDDENTDVQKLTTSWMEKIDTKMPENISKIDSNIISSPMVSKVEARFIVPKGRLRKNSTDFTSSFSNSLSLPKSYGKLIFFTSKKNSSSTKKNLANDISDNKHNNNSSNTIGHNIPVTTATATCDEIACTSTEHEYNVYEEERMFTTRVYSLEDSVSSLSTNPLDDTYSEAVQVNTRHIEDTESTAHIRKHSYTTSLSSIKRLFKITSFSNNNSNSCDHQESTVADDCAISSSLKETTSSPVSTGSFSLMIENEDSDRDQIIQALYSNIEASTDLVSRKYRDLDVVLGEGSGGKVKLVQRVLDNKVFALKEYRSKKKRESERKYIKNIISEYCIASTLKNPNICETLEILYEKGKIFQILEYCEYDLFSLVMSEKMHYEEICCLFKQLINGVKYLHDIGLSHRDLKLDNCVVTRRGILKLIDFGASSVFHYPLSSQMIEANGIVGSDPYLSPEVFYFNEYDPRALDVWSVGIIFFCMITRRFPWKYPKVKDVQFKAFCSGRGVSSFKDLVTRPATDDSNNYDNDGYEEGVIDMGPNFILHRLPEETHKIMRRILEVSPFRRITINGILQDGWIKEIETCQVVGAASPNEASLRIINKGNHIHTNIDQRYAHIGGLHQRT</sequence>
<organism>
    <name type="scientific">Saccharomyces cerevisiae (strain ATCC 204508 / S288c)</name>
    <name type="common">Baker's yeast</name>
    <dbReference type="NCBI Taxonomy" id="559292"/>
    <lineage>
        <taxon>Eukaryota</taxon>
        <taxon>Fungi</taxon>
        <taxon>Dikarya</taxon>
        <taxon>Ascomycota</taxon>
        <taxon>Saccharomycotina</taxon>
        <taxon>Saccharomycetes</taxon>
        <taxon>Saccharomycetales</taxon>
        <taxon>Saccharomycetaceae</taxon>
        <taxon>Saccharomyces</taxon>
    </lineage>
</organism>
<evidence type="ECO:0000255" key="1">
    <source>
        <dbReference type="PROSITE-ProRule" id="PRU00159"/>
    </source>
</evidence>
<evidence type="ECO:0000255" key="2">
    <source>
        <dbReference type="PROSITE-ProRule" id="PRU10027"/>
    </source>
</evidence>
<evidence type="ECO:0000256" key="3">
    <source>
        <dbReference type="SAM" id="MobiDB-lite"/>
    </source>
</evidence>
<evidence type="ECO:0000269" key="4">
    <source>
    </source>
</evidence>
<evidence type="ECO:0000269" key="5">
    <source>
    </source>
</evidence>
<evidence type="ECO:0000269" key="6">
    <source>
    </source>
</evidence>
<evidence type="ECO:0000269" key="7">
    <source>
    </source>
</evidence>
<protein>
    <recommendedName>
        <fullName>Serine/threonine-protein kinase PRR2</fullName>
        <ecNumber>2.7.11.1</ecNumber>
    </recommendedName>
    <alternativeName>
        <fullName>Pheromone response regulator 2</fullName>
    </alternativeName>
</protein>
<dbReference type="EC" id="2.7.11.1"/>
<dbReference type="EMBL" id="X99000">
    <property type="protein sequence ID" value="CAA67476.1"/>
    <property type="molecule type" value="Genomic_DNA"/>
</dbReference>
<dbReference type="EMBL" id="Z74262">
    <property type="protein sequence ID" value="CAA98792.1"/>
    <property type="molecule type" value="Genomic_DNA"/>
</dbReference>
<dbReference type="EMBL" id="BK006938">
    <property type="protein sequence ID" value="DAA11650.1"/>
    <property type="molecule type" value="Genomic_DNA"/>
</dbReference>
<dbReference type="PIR" id="S67773">
    <property type="entry name" value="S67773"/>
</dbReference>
<dbReference type="RefSeq" id="NP_010067.1">
    <property type="nucleotide sequence ID" value="NM_001180274.1"/>
</dbReference>
<dbReference type="SMR" id="Q12310"/>
<dbReference type="BioGRID" id="31831">
    <property type="interactions" value="88"/>
</dbReference>
<dbReference type="DIP" id="DIP-1640N"/>
<dbReference type="FunCoup" id="Q12310">
    <property type="interactions" value="315"/>
</dbReference>
<dbReference type="IntAct" id="Q12310">
    <property type="interactions" value="6"/>
</dbReference>
<dbReference type="MINT" id="Q12310"/>
<dbReference type="STRING" id="4932.YDL214C"/>
<dbReference type="iPTMnet" id="Q12310"/>
<dbReference type="PaxDb" id="4932-YDL214C"/>
<dbReference type="PeptideAtlas" id="Q12310"/>
<dbReference type="EnsemblFungi" id="YDL214C_mRNA">
    <property type="protein sequence ID" value="YDL214C"/>
    <property type="gene ID" value="YDL214C"/>
</dbReference>
<dbReference type="GeneID" id="851312"/>
<dbReference type="KEGG" id="sce:YDL214C"/>
<dbReference type="AGR" id="SGD:S000002373"/>
<dbReference type="SGD" id="S000002373">
    <property type="gene designation" value="PRR2"/>
</dbReference>
<dbReference type="VEuPathDB" id="FungiDB:YDL214C"/>
<dbReference type="eggNOG" id="KOG0590">
    <property type="taxonomic scope" value="Eukaryota"/>
</dbReference>
<dbReference type="GeneTree" id="ENSGT00940000176633"/>
<dbReference type="HOGENOM" id="CLU_000288_82_4_1"/>
<dbReference type="InParanoid" id="Q12310"/>
<dbReference type="OrthoDB" id="6513151at2759"/>
<dbReference type="BioCyc" id="YEAST:G3O-29596-MONOMER"/>
<dbReference type="BioGRID-ORCS" id="851312">
    <property type="hits" value="1 hit in 13 CRISPR screens"/>
</dbReference>
<dbReference type="PRO" id="PR:Q12310"/>
<dbReference type="Proteomes" id="UP000002311">
    <property type="component" value="Chromosome IV"/>
</dbReference>
<dbReference type="RNAct" id="Q12310">
    <property type="molecule type" value="protein"/>
</dbReference>
<dbReference type="GO" id="GO:0005524">
    <property type="term" value="F:ATP binding"/>
    <property type="evidence" value="ECO:0007669"/>
    <property type="project" value="UniProtKB-KW"/>
</dbReference>
<dbReference type="GO" id="GO:0004672">
    <property type="term" value="F:protein kinase activity"/>
    <property type="evidence" value="ECO:0007005"/>
    <property type="project" value="SGD"/>
</dbReference>
<dbReference type="GO" id="GO:0106310">
    <property type="term" value="F:protein serine kinase activity"/>
    <property type="evidence" value="ECO:0007669"/>
    <property type="project" value="RHEA"/>
</dbReference>
<dbReference type="GO" id="GO:0004674">
    <property type="term" value="F:protein serine/threonine kinase activity"/>
    <property type="evidence" value="ECO:0000318"/>
    <property type="project" value="GO_Central"/>
</dbReference>
<dbReference type="GO" id="GO:0031138">
    <property type="term" value="P:negative regulation of conjugation with cellular fusion"/>
    <property type="evidence" value="ECO:0000315"/>
    <property type="project" value="SGD"/>
</dbReference>
<dbReference type="GO" id="GO:0000122">
    <property type="term" value="P:negative regulation of transcription by RNA polymerase II"/>
    <property type="evidence" value="ECO:0000315"/>
    <property type="project" value="SGD"/>
</dbReference>
<dbReference type="GO" id="GO:0019236">
    <property type="term" value="P:response to pheromone"/>
    <property type="evidence" value="ECO:0007669"/>
    <property type="project" value="UniProtKB-KW"/>
</dbReference>
<dbReference type="Gene3D" id="1.10.510.10">
    <property type="entry name" value="Transferase(Phosphotransferase) domain 1"/>
    <property type="match status" value="1"/>
</dbReference>
<dbReference type="InterPro" id="IPR011009">
    <property type="entry name" value="Kinase-like_dom_sf"/>
</dbReference>
<dbReference type="InterPro" id="IPR000719">
    <property type="entry name" value="Prot_kinase_dom"/>
</dbReference>
<dbReference type="InterPro" id="IPR017441">
    <property type="entry name" value="Protein_kinase_ATP_BS"/>
</dbReference>
<dbReference type="InterPro" id="IPR008271">
    <property type="entry name" value="Ser/Thr_kinase_AS"/>
</dbReference>
<dbReference type="PANTHER" id="PTHR24343:SF113">
    <property type="entry name" value="NITROGEN PERMEASE REACTIVATOR PROTEIN-RELATED"/>
    <property type="match status" value="1"/>
</dbReference>
<dbReference type="PANTHER" id="PTHR24343">
    <property type="entry name" value="SERINE/THREONINE KINASE"/>
    <property type="match status" value="1"/>
</dbReference>
<dbReference type="Pfam" id="PF00069">
    <property type="entry name" value="Pkinase"/>
    <property type="match status" value="1"/>
</dbReference>
<dbReference type="SMART" id="SM00220">
    <property type="entry name" value="S_TKc"/>
    <property type="match status" value="1"/>
</dbReference>
<dbReference type="SUPFAM" id="SSF56112">
    <property type="entry name" value="Protein kinase-like (PK-like)"/>
    <property type="match status" value="1"/>
</dbReference>
<dbReference type="PROSITE" id="PS00107">
    <property type="entry name" value="PROTEIN_KINASE_ATP"/>
    <property type="match status" value="1"/>
</dbReference>
<dbReference type="PROSITE" id="PS50011">
    <property type="entry name" value="PROTEIN_KINASE_DOM"/>
    <property type="match status" value="1"/>
</dbReference>
<dbReference type="PROSITE" id="PS00108">
    <property type="entry name" value="PROTEIN_KINASE_ST"/>
    <property type="match status" value="1"/>
</dbReference>